<reference key="1">
    <citation type="submission" date="2006-08" db="EMBL/GenBank/DDBJ databases">
        <title>Complete sequence of Shewanella sp. MR-4.</title>
        <authorList>
            <consortium name="US DOE Joint Genome Institute"/>
            <person name="Copeland A."/>
            <person name="Lucas S."/>
            <person name="Lapidus A."/>
            <person name="Barry K."/>
            <person name="Detter J.C."/>
            <person name="Glavina del Rio T."/>
            <person name="Hammon N."/>
            <person name="Israni S."/>
            <person name="Dalin E."/>
            <person name="Tice H."/>
            <person name="Pitluck S."/>
            <person name="Kiss H."/>
            <person name="Brettin T."/>
            <person name="Bruce D."/>
            <person name="Han C."/>
            <person name="Tapia R."/>
            <person name="Gilna P."/>
            <person name="Schmutz J."/>
            <person name="Larimer F."/>
            <person name="Land M."/>
            <person name="Hauser L."/>
            <person name="Kyrpides N."/>
            <person name="Mikhailova N."/>
            <person name="Nealson K."/>
            <person name="Konstantinidis K."/>
            <person name="Klappenbach J."/>
            <person name="Tiedje J."/>
            <person name="Richardson P."/>
        </authorList>
    </citation>
    <scope>NUCLEOTIDE SEQUENCE [LARGE SCALE GENOMIC DNA]</scope>
    <source>
        <strain>MR-4</strain>
    </source>
</reference>
<gene>
    <name evidence="1" type="primary">lpxB</name>
    <name type="ordered locus">Shewmr4_2628</name>
</gene>
<evidence type="ECO:0000255" key="1">
    <source>
        <dbReference type="HAMAP-Rule" id="MF_00392"/>
    </source>
</evidence>
<keyword id="KW-0328">Glycosyltransferase</keyword>
<keyword id="KW-0441">Lipid A biosynthesis</keyword>
<keyword id="KW-0444">Lipid biosynthesis</keyword>
<keyword id="KW-0443">Lipid metabolism</keyword>
<keyword id="KW-0808">Transferase</keyword>
<name>LPXB_SHESM</name>
<feature type="chain" id="PRO_1000049419" description="Lipid-A-disaccharide synthase">
    <location>
        <begin position="1"/>
        <end position="385"/>
    </location>
</feature>
<organism>
    <name type="scientific">Shewanella sp. (strain MR-4)</name>
    <dbReference type="NCBI Taxonomy" id="60480"/>
    <lineage>
        <taxon>Bacteria</taxon>
        <taxon>Pseudomonadati</taxon>
        <taxon>Pseudomonadota</taxon>
        <taxon>Gammaproteobacteria</taxon>
        <taxon>Alteromonadales</taxon>
        <taxon>Shewanellaceae</taxon>
        <taxon>Shewanella</taxon>
    </lineage>
</organism>
<protein>
    <recommendedName>
        <fullName evidence="1">Lipid-A-disaccharide synthase</fullName>
        <ecNumber evidence="1">2.4.1.182</ecNumber>
    </recommendedName>
</protein>
<comment type="function">
    <text evidence="1">Condensation of UDP-2,3-diacylglucosamine and 2,3-diacylglucosamine-1-phosphate to form lipid A disaccharide, a precursor of lipid A, a phosphorylated glycolipid that anchors the lipopolysaccharide to the outer membrane of the cell.</text>
</comment>
<comment type="catalytic activity">
    <reaction evidence="1">
        <text>a lipid X + a UDP-2-N,3-O-bis[(3R)-3-hydroxyacyl]-alpha-D-glucosamine = a lipid A disaccharide + UDP + H(+)</text>
        <dbReference type="Rhea" id="RHEA:67828"/>
        <dbReference type="ChEBI" id="CHEBI:15378"/>
        <dbReference type="ChEBI" id="CHEBI:58223"/>
        <dbReference type="ChEBI" id="CHEBI:137748"/>
        <dbReference type="ChEBI" id="CHEBI:176338"/>
        <dbReference type="ChEBI" id="CHEBI:176343"/>
        <dbReference type="EC" id="2.4.1.182"/>
    </reaction>
</comment>
<comment type="pathway">
    <text evidence="1">Bacterial outer membrane biogenesis; LPS lipid A biosynthesis.</text>
</comment>
<comment type="similarity">
    <text evidence="1">Belongs to the LpxB family.</text>
</comment>
<accession>Q0HGW8</accession>
<dbReference type="EC" id="2.4.1.182" evidence="1"/>
<dbReference type="EMBL" id="CP000446">
    <property type="protein sequence ID" value="ABI39699.1"/>
    <property type="molecule type" value="Genomic_DNA"/>
</dbReference>
<dbReference type="RefSeq" id="WP_011623380.1">
    <property type="nucleotide sequence ID" value="NC_008321.1"/>
</dbReference>
<dbReference type="SMR" id="Q0HGW8"/>
<dbReference type="CAZy" id="GT19">
    <property type="family name" value="Glycosyltransferase Family 19"/>
</dbReference>
<dbReference type="KEGG" id="she:Shewmr4_2628"/>
<dbReference type="HOGENOM" id="CLU_036577_3_0_6"/>
<dbReference type="UniPathway" id="UPA00973"/>
<dbReference type="GO" id="GO:0016020">
    <property type="term" value="C:membrane"/>
    <property type="evidence" value="ECO:0007669"/>
    <property type="project" value="GOC"/>
</dbReference>
<dbReference type="GO" id="GO:0008915">
    <property type="term" value="F:lipid-A-disaccharide synthase activity"/>
    <property type="evidence" value="ECO:0007669"/>
    <property type="project" value="UniProtKB-UniRule"/>
</dbReference>
<dbReference type="GO" id="GO:0005543">
    <property type="term" value="F:phospholipid binding"/>
    <property type="evidence" value="ECO:0007669"/>
    <property type="project" value="TreeGrafter"/>
</dbReference>
<dbReference type="GO" id="GO:0009245">
    <property type="term" value="P:lipid A biosynthetic process"/>
    <property type="evidence" value="ECO:0007669"/>
    <property type="project" value="UniProtKB-UniRule"/>
</dbReference>
<dbReference type="CDD" id="cd01635">
    <property type="entry name" value="Glycosyltransferase_GTB-type"/>
    <property type="match status" value="1"/>
</dbReference>
<dbReference type="HAMAP" id="MF_00392">
    <property type="entry name" value="LpxB"/>
    <property type="match status" value="1"/>
</dbReference>
<dbReference type="InterPro" id="IPR003835">
    <property type="entry name" value="Glyco_trans_19"/>
</dbReference>
<dbReference type="NCBIfam" id="TIGR00215">
    <property type="entry name" value="lpxB"/>
    <property type="match status" value="1"/>
</dbReference>
<dbReference type="PANTHER" id="PTHR30372">
    <property type="entry name" value="LIPID-A-DISACCHARIDE SYNTHASE"/>
    <property type="match status" value="1"/>
</dbReference>
<dbReference type="PANTHER" id="PTHR30372:SF4">
    <property type="entry name" value="LIPID-A-DISACCHARIDE SYNTHASE, MITOCHONDRIAL-RELATED"/>
    <property type="match status" value="1"/>
</dbReference>
<dbReference type="Pfam" id="PF02684">
    <property type="entry name" value="LpxB"/>
    <property type="match status" value="1"/>
</dbReference>
<dbReference type="SUPFAM" id="SSF53756">
    <property type="entry name" value="UDP-Glycosyltransferase/glycogen phosphorylase"/>
    <property type="match status" value="1"/>
</dbReference>
<proteinExistence type="inferred from homology"/>
<sequence>MSKKSQLVFAMVAGELSGDILGAGLMAALQKTHPNARFVGIGGPRMEALGFESLFAMEELAVMGIVEVLSRLPRLLHVRSSLIKSITELKPDCFIGIDAPDFNIGLELKLKAQGIKTVHYVSPSVWAWRPKRIFKIAKATNMVLSLLPFEKAFYDKHQVPCTFVGHTLADDIPLESDKASARQLLELDPDAEYLAILPGSRGGELKQLAEPFVKAALLIKQQFPDIRFVTPLVNQKRREQFEQALKAHAPDLEIHMVEGKSREVMAAADGILLASGTATLEAMLIKRPMVVAYRVSPLTYQIAKTMMQVNRFSLPNLLAGRDVVPELIQHDCTPEKIAAAVGVELNRDFAPIKAEFERLHQMLRCDASQKAAEAVLALVDAKDVN</sequence>